<dbReference type="EMBL" id="CR543861">
    <property type="protein sequence ID" value="CAG67428.1"/>
    <property type="molecule type" value="Genomic_DNA"/>
</dbReference>
<dbReference type="RefSeq" id="WP_001205031.1">
    <property type="nucleotide sequence ID" value="NC_005966.1"/>
</dbReference>
<dbReference type="SMR" id="Q6FET0"/>
<dbReference type="STRING" id="202950.GCA_001485005_00742"/>
<dbReference type="GeneID" id="97427282"/>
<dbReference type="KEGG" id="aci:ACIAD0501"/>
<dbReference type="eggNOG" id="COG0267">
    <property type="taxonomic scope" value="Bacteria"/>
</dbReference>
<dbReference type="HOGENOM" id="CLU_190949_1_1_6"/>
<dbReference type="OrthoDB" id="21586at2"/>
<dbReference type="BioCyc" id="ASP62977:ACIAD_RS02275-MONOMER"/>
<dbReference type="Proteomes" id="UP000000430">
    <property type="component" value="Chromosome"/>
</dbReference>
<dbReference type="GO" id="GO:0022625">
    <property type="term" value="C:cytosolic large ribosomal subunit"/>
    <property type="evidence" value="ECO:0007669"/>
    <property type="project" value="TreeGrafter"/>
</dbReference>
<dbReference type="GO" id="GO:0003735">
    <property type="term" value="F:structural constituent of ribosome"/>
    <property type="evidence" value="ECO:0007669"/>
    <property type="project" value="InterPro"/>
</dbReference>
<dbReference type="GO" id="GO:0006412">
    <property type="term" value="P:translation"/>
    <property type="evidence" value="ECO:0007669"/>
    <property type="project" value="UniProtKB-UniRule"/>
</dbReference>
<dbReference type="FunFam" id="2.20.28.120:FF:000001">
    <property type="entry name" value="50S ribosomal protein L33"/>
    <property type="match status" value="1"/>
</dbReference>
<dbReference type="Gene3D" id="2.20.28.120">
    <property type="entry name" value="Ribosomal protein L33"/>
    <property type="match status" value="1"/>
</dbReference>
<dbReference type="HAMAP" id="MF_00294">
    <property type="entry name" value="Ribosomal_bL33"/>
    <property type="match status" value="1"/>
</dbReference>
<dbReference type="InterPro" id="IPR001705">
    <property type="entry name" value="Ribosomal_bL33"/>
</dbReference>
<dbReference type="InterPro" id="IPR018264">
    <property type="entry name" value="Ribosomal_bL33_CS"/>
</dbReference>
<dbReference type="InterPro" id="IPR038584">
    <property type="entry name" value="Ribosomal_bL33_sf"/>
</dbReference>
<dbReference type="InterPro" id="IPR011332">
    <property type="entry name" value="Ribosomal_zn-bd"/>
</dbReference>
<dbReference type="NCBIfam" id="NF001860">
    <property type="entry name" value="PRK00595.1"/>
    <property type="match status" value="1"/>
</dbReference>
<dbReference type="NCBIfam" id="TIGR01023">
    <property type="entry name" value="rpmG_bact"/>
    <property type="match status" value="1"/>
</dbReference>
<dbReference type="PANTHER" id="PTHR15238">
    <property type="entry name" value="54S RIBOSOMAL PROTEIN L39, MITOCHONDRIAL"/>
    <property type="match status" value="1"/>
</dbReference>
<dbReference type="PANTHER" id="PTHR15238:SF1">
    <property type="entry name" value="LARGE RIBOSOMAL SUBUNIT PROTEIN BL33M"/>
    <property type="match status" value="1"/>
</dbReference>
<dbReference type="Pfam" id="PF00471">
    <property type="entry name" value="Ribosomal_L33"/>
    <property type="match status" value="1"/>
</dbReference>
<dbReference type="SUPFAM" id="SSF57829">
    <property type="entry name" value="Zn-binding ribosomal proteins"/>
    <property type="match status" value="1"/>
</dbReference>
<dbReference type="PROSITE" id="PS00582">
    <property type="entry name" value="RIBOSOMAL_L33"/>
    <property type="match status" value="1"/>
</dbReference>
<feature type="chain" id="PRO_0000356365" description="Large ribosomal subunit protein bL33">
    <location>
        <begin position="1"/>
        <end position="51"/>
    </location>
</feature>
<protein>
    <recommendedName>
        <fullName evidence="1">Large ribosomal subunit protein bL33</fullName>
    </recommendedName>
    <alternativeName>
        <fullName evidence="2">50S ribosomal protein L33</fullName>
    </alternativeName>
</protein>
<reference key="1">
    <citation type="journal article" date="2004" name="Nucleic Acids Res.">
        <title>Unique features revealed by the genome sequence of Acinetobacter sp. ADP1, a versatile and naturally transformation competent bacterium.</title>
        <authorList>
            <person name="Barbe V."/>
            <person name="Vallenet D."/>
            <person name="Fonknechten N."/>
            <person name="Kreimeyer A."/>
            <person name="Oztas S."/>
            <person name="Labarre L."/>
            <person name="Cruveiller S."/>
            <person name="Robert C."/>
            <person name="Duprat S."/>
            <person name="Wincker P."/>
            <person name="Ornston L.N."/>
            <person name="Weissenbach J."/>
            <person name="Marliere P."/>
            <person name="Cohen G.N."/>
            <person name="Medigue C."/>
        </authorList>
    </citation>
    <scope>NUCLEOTIDE SEQUENCE [LARGE SCALE GENOMIC DNA]</scope>
    <source>
        <strain>ATCC 33305 / BD413 / ADP1</strain>
    </source>
</reference>
<keyword id="KW-0687">Ribonucleoprotein</keyword>
<keyword id="KW-0689">Ribosomal protein</keyword>
<accession>Q6FET0</accession>
<organism>
    <name type="scientific">Acinetobacter baylyi (strain ATCC 33305 / BD413 / ADP1)</name>
    <dbReference type="NCBI Taxonomy" id="62977"/>
    <lineage>
        <taxon>Bacteria</taxon>
        <taxon>Pseudomonadati</taxon>
        <taxon>Pseudomonadota</taxon>
        <taxon>Gammaproteobacteria</taxon>
        <taxon>Moraxellales</taxon>
        <taxon>Moraxellaceae</taxon>
        <taxon>Acinetobacter</taxon>
    </lineage>
</organism>
<comment type="similarity">
    <text evidence="1">Belongs to the bacterial ribosomal protein bL33 family.</text>
</comment>
<gene>
    <name evidence="1" type="primary">rpmG</name>
    <name type="ordered locus">ACIAD0501</name>
</gene>
<sequence length="51" mass="6090">MRDKIRLVSSAGTGYFYTTTKNKRTMPEKMEIKKFDPKIRQHVIFKEAKIK</sequence>
<evidence type="ECO:0000255" key="1">
    <source>
        <dbReference type="HAMAP-Rule" id="MF_00294"/>
    </source>
</evidence>
<evidence type="ECO:0000305" key="2"/>
<proteinExistence type="inferred from homology"/>
<name>RL33_ACIAD</name>